<reference key="1">
    <citation type="journal article" date="2009" name="Nature">
        <title>Evolution of pathogenicity and sexual reproduction in eight Candida genomes.</title>
        <authorList>
            <person name="Butler G."/>
            <person name="Rasmussen M.D."/>
            <person name="Lin M.F."/>
            <person name="Santos M.A.S."/>
            <person name="Sakthikumar S."/>
            <person name="Munro C.A."/>
            <person name="Rheinbay E."/>
            <person name="Grabherr M."/>
            <person name="Forche A."/>
            <person name="Reedy J.L."/>
            <person name="Agrafioti I."/>
            <person name="Arnaud M.B."/>
            <person name="Bates S."/>
            <person name="Brown A.J.P."/>
            <person name="Brunke S."/>
            <person name="Costanzo M.C."/>
            <person name="Fitzpatrick D.A."/>
            <person name="de Groot P.W.J."/>
            <person name="Harris D."/>
            <person name="Hoyer L.L."/>
            <person name="Hube B."/>
            <person name="Klis F.M."/>
            <person name="Kodira C."/>
            <person name="Lennard N."/>
            <person name="Logue M.E."/>
            <person name="Martin R."/>
            <person name="Neiman A.M."/>
            <person name="Nikolaou E."/>
            <person name="Quail M.A."/>
            <person name="Quinn J."/>
            <person name="Santos M.C."/>
            <person name="Schmitzberger F.F."/>
            <person name="Sherlock G."/>
            <person name="Shah P."/>
            <person name="Silverstein K.A.T."/>
            <person name="Skrzypek M.S."/>
            <person name="Soll D."/>
            <person name="Staggs R."/>
            <person name="Stansfield I."/>
            <person name="Stumpf M.P.H."/>
            <person name="Sudbery P.E."/>
            <person name="Srikantha T."/>
            <person name="Zeng Q."/>
            <person name="Berman J."/>
            <person name="Berriman M."/>
            <person name="Heitman J."/>
            <person name="Gow N.A.R."/>
            <person name="Lorenz M.C."/>
            <person name="Birren B.W."/>
            <person name="Kellis M."/>
            <person name="Cuomo C.A."/>
        </authorList>
    </citation>
    <scope>NUCLEOTIDE SEQUENCE [LARGE SCALE GENOMIC DNA]</scope>
    <source>
        <strain>ATCC 42720</strain>
    </source>
</reference>
<organism>
    <name type="scientific">Clavispora lusitaniae (strain ATCC 42720)</name>
    <name type="common">Yeast</name>
    <name type="synonym">Candida lusitaniae</name>
    <dbReference type="NCBI Taxonomy" id="306902"/>
    <lineage>
        <taxon>Eukaryota</taxon>
        <taxon>Fungi</taxon>
        <taxon>Dikarya</taxon>
        <taxon>Ascomycota</taxon>
        <taxon>Saccharomycotina</taxon>
        <taxon>Pichiomycetes</taxon>
        <taxon>Metschnikowiaceae</taxon>
        <taxon>Clavispora</taxon>
    </lineage>
</organism>
<evidence type="ECO:0000250" key="1"/>
<evidence type="ECO:0000255" key="2"/>
<evidence type="ECO:0000305" key="3"/>
<proteinExistence type="inferred from homology"/>
<dbReference type="EMBL" id="CH408079">
    <property type="protein sequence ID" value="EEQ39929.1"/>
    <property type="molecule type" value="Genomic_DNA"/>
</dbReference>
<dbReference type="RefSeq" id="XP_002616816.1">
    <property type="nucleotide sequence ID" value="XM_002616770.1"/>
</dbReference>
<dbReference type="SMR" id="C4Y4R9"/>
<dbReference type="FunCoup" id="C4Y4R9">
    <property type="interactions" value="18"/>
</dbReference>
<dbReference type="STRING" id="306902.C4Y4R9"/>
<dbReference type="GeneID" id="8497246"/>
<dbReference type="KEGG" id="clu:CLUG_04057"/>
<dbReference type="VEuPathDB" id="FungiDB:CLUG_04057"/>
<dbReference type="HOGENOM" id="CLU_147114_2_2_1"/>
<dbReference type="InParanoid" id="C4Y4R9"/>
<dbReference type="OMA" id="KYKLRIH"/>
<dbReference type="OrthoDB" id="83349at4891"/>
<dbReference type="Proteomes" id="UP000007703">
    <property type="component" value="Unassembled WGS sequence"/>
</dbReference>
<dbReference type="GO" id="GO:0005759">
    <property type="term" value="C:mitochondrial matrix"/>
    <property type="evidence" value="ECO:0007669"/>
    <property type="project" value="UniProtKB-SubCell"/>
</dbReference>
<dbReference type="GO" id="GO:0044183">
    <property type="term" value="F:protein folding chaperone"/>
    <property type="evidence" value="ECO:0007669"/>
    <property type="project" value="TreeGrafter"/>
</dbReference>
<dbReference type="GO" id="GO:0034551">
    <property type="term" value="P:mitochondrial respiratory chain complex III assembly"/>
    <property type="evidence" value="ECO:0007669"/>
    <property type="project" value="InterPro"/>
</dbReference>
<dbReference type="CDD" id="cd20267">
    <property type="entry name" value="Complex1_LYR_LYRM7"/>
    <property type="match status" value="1"/>
</dbReference>
<dbReference type="InterPro" id="IPR045298">
    <property type="entry name" value="Complex1_LYR_LYRM7"/>
</dbReference>
<dbReference type="InterPro" id="IPR050435">
    <property type="entry name" value="MZM1/LYRM7"/>
</dbReference>
<dbReference type="PANTHER" id="PTHR46749">
    <property type="entry name" value="COMPLEX III ASSEMBLY FACTOR LYRM7"/>
    <property type="match status" value="1"/>
</dbReference>
<dbReference type="PANTHER" id="PTHR46749:SF1">
    <property type="entry name" value="COMPLEX III ASSEMBLY FACTOR LYRM7"/>
    <property type="match status" value="1"/>
</dbReference>
<protein>
    <recommendedName>
        <fullName>Mitochondrial zinc maintenance protein 1, mitochondrial</fullName>
    </recommendedName>
</protein>
<gene>
    <name type="primary">MZM1</name>
    <name type="ORF">CLUG_04057</name>
</gene>
<sequence length="115" mass="12776">MSNPALQAYRTALRATRVAFNGDNFVLKSARAKIREGLLSNRDLADKMEVEKKVAELNEVAQFLVKNIVQGEKEEGKDRYLLKIHDKTELGSNETIKQSKANLGSLAGAKVKRCS</sequence>
<keyword id="KW-0143">Chaperone</keyword>
<keyword id="KW-0496">Mitochondrion</keyword>
<keyword id="KW-1185">Reference proteome</keyword>
<keyword id="KW-0809">Transit peptide</keyword>
<feature type="transit peptide" description="Mitochondrion" evidence="2">
    <location>
        <begin position="1"/>
        <end position="15"/>
    </location>
</feature>
<feature type="chain" id="PRO_0000405492" description="Mitochondrial zinc maintenance protein 1, mitochondrial">
    <location>
        <begin position="16"/>
        <end position="115"/>
    </location>
</feature>
<comment type="function">
    <text evidence="1">Assembly factor required for Rieske Fe-S protein RIP1 incorporation into the cytochrome b-c1 (CIII) complex. Functions as a chaperone, binding to this subunit within the mitochondrial matrix and stabilizing it prior to its translocation and insertion into the late CIII dimeric intermediate within the mitochondrial inner membrane. Modulates the mitochondrial matrix zinc pool (By similarity).</text>
</comment>
<comment type="subunit">
    <text evidence="1">Interacts with RIP1.</text>
</comment>
<comment type="subcellular location">
    <subcellularLocation>
        <location evidence="1">Mitochondrion matrix</location>
    </subcellularLocation>
</comment>
<comment type="similarity">
    <text evidence="3">Belongs to the complex I LYR family. MZM1 subfamily.</text>
</comment>
<accession>C4Y4R9</accession>
<name>MZM1_CLAL4</name>